<keyword id="KW-0217">Developmental protein</keyword>
<keyword id="KW-1015">Disulfide bond</keyword>
<keyword id="KW-0340">Growth factor binding</keyword>
<keyword id="KW-0341">Growth regulation</keyword>
<keyword id="KW-1185">Reference proteome</keyword>
<keyword id="KW-0964">Secreted</keyword>
<keyword id="KW-0732">Signal</keyword>
<protein>
    <recommendedName>
        <fullName>Insulin-like growth factor-binding protein 2-B</fullName>
        <shortName>IGF-binding protein 2-B</shortName>
        <shortName>IGFBP-2-B</shortName>
        <shortName>IGFBP-2b</shortName>
    </recommendedName>
</protein>
<proteinExistence type="evidence at protein level"/>
<comment type="function">
    <text evidence="7">IGF-binding proteins prolong the half-life of the IGFs and have been shown to either inhibit or stimulate the growth promoting effects of the IGFs on cell culture. They alter the interaction of IGFs with their cell surface receptors.</text>
</comment>
<comment type="subunit">
    <text evidence="2 7">Interacts with igf2 (By similarity). Interacts with igf1.</text>
</comment>
<comment type="subcellular location">
    <subcellularLocation>
        <location evidence="8">Secreted</location>
    </subcellularLocation>
</comment>
<comment type="tissue specificity">
    <text evidence="7">In early embryos, expressed at a low level in most tissues with expression becoming abundant in the liver by 96 hours post-fertilization (hpf). The expression pattern in adults exhibits sexual dimorphism; in adult males expression is limited exclusively to the liver whereas in adult females expression is observed in the liver and other tissues including the gut, kidney, ovary and muscle.</text>
</comment>
<comment type="developmental stage">
    <text evidence="7">Expressed throughout embryogenesis.</text>
</comment>
<reference evidence="8 9" key="1">
    <citation type="journal article" date="2008" name="PLoS ONE">
        <title>Duplication of the IGFBP-2 gene in teleost fish: protein structure and functionality conservation and gene expression divergence.</title>
        <authorList>
            <person name="Zhou J."/>
            <person name="Li W."/>
            <person name="Kamei H."/>
            <person name="Duan C."/>
        </authorList>
    </citation>
    <scope>NUCLEOTIDE SEQUENCE [MRNA]</scope>
    <scope>FUNCTION</scope>
    <scope>INTERACTION WITH IGF1</scope>
    <scope>TISSUE SPECIFICITY</scope>
    <scope>DEVELOPMENTAL STAGE</scope>
</reference>
<accession>B3F211</accession>
<feature type="signal peptide" evidence="3">
    <location>
        <begin position="1"/>
        <end position="17"/>
    </location>
</feature>
<feature type="chain" id="PRO_0000381735" description="Insulin-like growth factor-binding protein 2-B" evidence="2 8">
    <location>
        <begin position="18"/>
        <end position="265"/>
    </location>
</feature>
<feature type="domain" description="IGFBP N-terminal" evidence="5">
    <location>
        <begin position="19"/>
        <end position="99"/>
    </location>
</feature>
<feature type="domain" description="Thyroglobulin type-1" evidence="4">
    <location>
        <begin position="166"/>
        <end position="248"/>
    </location>
</feature>
<feature type="region of interest" description="Disordered" evidence="6">
    <location>
        <begin position="107"/>
        <end position="128"/>
    </location>
</feature>
<feature type="region of interest" description="Disordered" evidence="6">
    <location>
        <begin position="144"/>
        <end position="170"/>
    </location>
</feature>
<feature type="region of interest" description="Disordered" evidence="6">
    <location>
        <begin position="238"/>
        <end position="265"/>
    </location>
</feature>
<feature type="short sequence motif" description="Cell attachment site" evidence="3">
    <location>
        <begin position="243"/>
        <end position="245"/>
    </location>
</feature>
<feature type="compositionally biased region" description="Polar residues" evidence="6">
    <location>
        <begin position="107"/>
        <end position="122"/>
    </location>
</feature>
<feature type="disulfide bond" evidence="5">
    <location>
        <begin position="23"/>
        <end position="49"/>
    </location>
</feature>
<feature type="disulfide bond" evidence="5">
    <location>
        <begin position="26"/>
        <end position="51"/>
    </location>
</feature>
<feature type="disulfide bond" evidence="5">
    <location>
        <begin position="34"/>
        <end position="52"/>
    </location>
</feature>
<feature type="disulfide bond" evidence="5">
    <location>
        <begin position="41"/>
        <end position="55"/>
    </location>
</feature>
<feature type="disulfide bond" evidence="5">
    <location>
        <begin position="63"/>
        <end position="76"/>
    </location>
</feature>
<feature type="disulfide bond" evidence="5">
    <location>
        <begin position="70"/>
        <end position="96"/>
    </location>
</feature>
<feature type="disulfide bond" evidence="1 4">
    <location>
        <begin position="169"/>
        <end position="203"/>
    </location>
</feature>
<feature type="disulfide bond" evidence="1 4">
    <location>
        <begin position="214"/>
        <end position="225"/>
    </location>
</feature>
<feature type="disulfide bond" evidence="1 4">
    <location>
        <begin position="227"/>
        <end position="248"/>
    </location>
</feature>
<sequence>MSLALLCSLLLVHGSLGEIVFRCPSCTAERQAACPKLTTSCEIVREPGCGCCPVCARQKGELCGVYTTRCGSGLRCYPSANSELPLEQLIQGLGRCENKVDLEPTMTNQESAAHSGEVNGTRSPPMKKPGKDYQYIKEIAVNKHHNNKRTRMYNTQDDPKTPHPKQSQCQQELDKVLENISRMAFHDNKGPLENLYDLKFPNCDKTGQYNLKQCHMSTHGQRGECWCVNPYTGVQIPSSDKVRGDPNCSQYYGGPELEPPTAQQK</sequence>
<gene>
    <name evidence="10" type="primary">igfbp2b</name>
    <name evidence="10" type="synonym">igfbp2a</name>
</gene>
<evidence type="ECO:0000250" key="1">
    <source>
        <dbReference type="UniProtKB" id="P18065"/>
    </source>
</evidence>
<evidence type="ECO:0000250" key="2">
    <source>
        <dbReference type="UniProtKB" id="Q9PTH3"/>
    </source>
</evidence>
<evidence type="ECO:0000255" key="3"/>
<evidence type="ECO:0000255" key="4">
    <source>
        <dbReference type="PROSITE-ProRule" id="PRU00500"/>
    </source>
</evidence>
<evidence type="ECO:0000255" key="5">
    <source>
        <dbReference type="PROSITE-ProRule" id="PRU00653"/>
    </source>
</evidence>
<evidence type="ECO:0000256" key="6">
    <source>
        <dbReference type="SAM" id="MobiDB-lite"/>
    </source>
</evidence>
<evidence type="ECO:0000269" key="7">
    <source>
    </source>
</evidence>
<evidence type="ECO:0000305" key="8"/>
<evidence type="ECO:0000312" key="9">
    <source>
        <dbReference type="EMBL" id="ABS30427.1"/>
    </source>
</evidence>
<evidence type="ECO:0000312" key="10">
    <source>
        <dbReference type="ZFIN" id="ZDB-GENE-090107-3"/>
    </source>
</evidence>
<organism>
    <name type="scientific">Danio rerio</name>
    <name type="common">Zebrafish</name>
    <name type="synonym">Brachydanio rerio</name>
    <dbReference type="NCBI Taxonomy" id="7955"/>
    <lineage>
        <taxon>Eukaryota</taxon>
        <taxon>Metazoa</taxon>
        <taxon>Chordata</taxon>
        <taxon>Craniata</taxon>
        <taxon>Vertebrata</taxon>
        <taxon>Euteleostomi</taxon>
        <taxon>Actinopterygii</taxon>
        <taxon>Neopterygii</taxon>
        <taxon>Teleostei</taxon>
        <taxon>Ostariophysi</taxon>
        <taxon>Cypriniformes</taxon>
        <taxon>Danionidae</taxon>
        <taxon>Danioninae</taxon>
        <taxon>Danio</taxon>
    </lineage>
</organism>
<dbReference type="EMBL" id="EF507265">
    <property type="protein sequence ID" value="ABS30427.1"/>
    <property type="molecule type" value="mRNA"/>
</dbReference>
<dbReference type="SMR" id="B3F211"/>
<dbReference type="FunCoup" id="B3F211">
    <property type="interactions" value="219"/>
</dbReference>
<dbReference type="STRING" id="7955.ENSDARP00000019643"/>
<dbReference type="PaxDb" id="7955-ENSDARP00000019643"/>
<dbReference type="AGR" id="ZFIN:ZDB-GENE-090107-3"/>
<dbReference type="ZFIN" id="ZDB-GENE-090107-3">
    <property type="gene designation" value="igfbp2b"/>
</dbReference>
<dbReference type="InParanoid" id="B3F211"/>
<dbReference type="PhylomeDB" id="B3F211"/>
<dbReference type="PRO" id="PR:B3F211"/>
<dbReference type="Proteomes" id="UP000000437">
    <property type="component" value="Unplaced"/>
</dbReference>
<dbReference type="GO" id="GO:0005576">
    <property type="term" value="C:extracellular region"/>
    <property type="evidence" value="ECO:0000250"/>
    <property type="project" value="UniProtKB"/>
</dbReference>
<dbReference type="GO" id="GO:0005615">
    <property type="term" value="C:extracellular space"/>
    <property type="evidence" value="ECO:0000318"/>
    <property type="project" value="GO_Central"/>
</dbReference>
<dbReference type="GO" id="GO:0005520">
    <property type="term" value="F:insulin-like growth factor binding"/>
    <property type="evidence" value="ECO:0000314"/>
    <property type="project" value="ZFIN"/>
</dbReference>
<dbReference type="GO" id="GO:0031994">
    <property type="term" value="F:insulin-like growth factor I binding"/>
    <property type="evidence" value="ECO:0000314"/>
    <property type="project" value="UniProtKB"/>
</dbReference>
<dbReference type="GO" id="GO:0031995">
    <property type="term" value="F:insulin-like growth factor II binding"/>
    <property type="evidence" value="ECO:0000250"/>
    <property type="project" value="UniProtKB"/>
</dbReference>
<dbReference type="GO" id="GO:0008285">
    <property type="term" value="P:negative regulation of cell population proliferation"/>
    <property type="evidence" value="ECO:0000250"/>
    <property type="project" value="UniProtKB"/>
</dbReference>
<dbReference type="GO" id="GO:0048640">
    <property type="term" value="P:negative regulation of developmental growth"/>
    <property type="evidence" value="ECO:0000315"/>
    <property type="project" value="UniProtKB"/>
</dbReference>
<dbReference type="GO" id="GO:0008156">
    <property type="term" value="P:negative regulation of DNA replication"/>
    <property type="evidence" value="ECO:0000250"/>
    <property type="project" value="UniProtKB"/>
</dbReference>
<dbReference type="GO" id="GO:0043567">
    <property type="term" value="P:regulation of insulin-like growth factor receptor signaling pathway"/>
    <property type="evidence" value="ECO:0000250"/>
    <property type="project" value="UniProtKB"/>
</dbReference>
<dbReference type="GO" id="GO:0002040">
    <property type="term" value="P:sprouting angiogenesis"/>
    <property type="evidence" value="ECO:0000316"/>
    <property type="project" value="ZFIN"/>
</dbReference>
<dbReference type="CDD" id="cd00191">
    <property type="entry name" value="TY"/>
    <property type="match status" value="1"/>
</dbReference>
<dbReference type="FunFam" id="4.10.40.20:FF:000001">
    <property type="entry name" value="Insulin-like growth factor binding protein 5"/>
    <property type="match status" value="1"/>
</dbReference>
<dbReference type="FunFam" id="4.10.800.10:FF:000002">
    <property type="entry name" value="Insulin-like growth factor-binding protein 2"/>
    <property type="match status" value="1"/>
</dbReference>
<dbReference type="Gene3D" id="4.10.40.20">
    <property type="match status" value="1"/>
</dbReference>
<dbReference type="Gene3D" id="4.10.800.10">
    <property type="entry name" value="Thyroglobulin type-1"/>
    <property type="match status" value="1"/>
</dbReference>
<dbReference type="InterPro" id="IPR009030">
    <property type="entry name" value="Growth_fac_rcpt_cys_sf"/>
</dbReference>
<dbReference type="InterPro" id="IPR012210">
    <property type="entry name" value="IGFBP-2"/>
</dbReference>
<dbReference type="InterPro" id="IPR000867">
    <property type="entry name" value="IGFBP-like"/>
</dbReference>
<dbReference type="InterPro" id="IPR022321">
    <property type="entry name" value="IGFBP_1-6_chordata"/>
</dbReference>
<dbReference type="InterPro" id="IPR017891">
    <property type="entry name" value="Insulin_GF-bd_Cys-rich_CS"/>
</dbReference>
<dbReference type="InterPro" id="IPR000716">
    <property type="entry name" value="Thyroglobulin_1"/>
</dbReference>
<dbReference type="InterPro" id="IPR036857">
    <property type="entry name" value="Thyroglobulin_1_sf"/>
</dbReference>
<dbReference type="PANTHER" id="PTHR11551">
    <property type="entry name" value="INSULIN-LIKE GROWTH FACTOR BINDING PROTEIN"/>
    <property type="match status" value="1"/>
</dbReference>
<dbReference type="PANTHER" id="PTHR11551:SF5">
    <property type="entry name" value="INSULIN-LIKE GROWTH FACTOR-BINDING PROTEIN 2"/>
    <property type="match status" value="1"/>
</dbReference>
<dbReference type="Pfam" id="PF00219">
    <property type="entry name" value="IGFBP"/>
    <property type="match status" value="1"/>
</dbReference>
<dbReference type="Pfam" id="PF00086">
    <property type="entry name" value="Thyroglobulin_1"/>
    <property type="match status" value="1"/>
</dbReference>
<dbReference type="PRINTS" id="PR01976">
    <property type="entry name" value="IGFBPFAMILY"/>
</dbReference>
<dbReference type="PRINTS" id="PR01978">
    <property type="entry name" value="IGFBPFAMILY2"/>
</dbReference>
<dbReference type="SMART" id="SM00121">
    <property type="entry name" value="IB"/>
    <property type="match status" value="1"/>
</dbReference>
<dbReference type="SMART" id="SM00211">
    <property type="entry name" value="TY"/>
    <property type="match status" value="1"/>
</dbReference>
<dbReference type="SUPFAM" id="SSF57184">
    <property type="entry name" value="Growth factor receptor domain"/>
    <property type="match status" value="1"/>
</dbReference>
<dbReference type="SUPFAM" id="SSF57610">
    <property type="entry name" value="Thyroglobulin type-1 domain"/>
    <property type="match status" value="1"/>
</dbReference>
<dbReference type="PROSITE" id="PS00222">
    <property type="entry name" value="IGFBP_N_1"/>
    <property type="match status" value="1"/>
</dbReference>
<dbReference type="PROSITE" id="PS51323">
    <property type="entry name" value="IGFBP_N_2"/>
    <property type="match status" value="1"/>
</dbReference>
<dbReference type="PROSITE" id="PS51162">
    <property type="entry name" value="THYROGLOBULIN_1_2"/>
    <property type="match status" value="1"/>
</dbReference>
<name>IBP2B_DANRE</name>